<comment type="function">
    <text>Stimulates the secretion of gonadotropins.</text>
</comment>
<comment type="subcellular location">
    <subcellularLocation>
        <location>Secreted</location>
    </subcellularLocation>
</comment>
<comment type="tissue specificity">
    <text>Expressed in forebrain but not in testis, ovary, kidney and liver.</text>
</comment>
<comment type="similarity">
    <text evidence="2">Belongs to the GnRH family.</text>
</comment>
<protein>
    <recommendedName>
        <fullName>Trp-8 progonadoliberin</fullName>
    </recommendedName>
    <component>
        <recommendedName>
            <fullName>Trp-8 gonadoliberin</fullName>
        </recommendedName>
        <alternativeName>
            <fullName>LH-RH</fullName>
        </alternativeName>
        <alternativeName>
            <fullName>Luliberin</fullName>
        </alternativeName>
        <alternativeName>
            <fullName>Trp-8 gonadotropin-releasing hormone</fullName>
            <shortName>[Trp8]-GnRH</shortName>
        </alternativeName>
    </component>
    <component>
        <recommendedName>
            <fullName>GnRH-associated peptide I</fullName>
        </recommendedName>
    </component>
</protein>
<sequence length="90" mass="10368">MSRHVTVVLLLAVVLLLSSHMSHGQHWSYGLWPGGKREVEGLQESYSEVPNEVSFTDPQHFERSIPQNRISLVREALMNWLEGENTRKKI</sequence>
<name>GON8_RANDY</name>
<evidence type="ECO:0000250" key="1"/>
<evidence type="ECO:0000305" key="2"/>
<accession>Q9IAU2</accession>
<keyword id="KW-0027">Amidation</keyword>
<keyword id="KW-0165">Cleavage on pair of basic residues</keyword>
<keyword id="KW-0372">Hormone</keyword>
<keyword id="KW-0873">Pyrrolidone carboxylic acid</keyword>
<keyword id="KW-0964">Secreted</keyword>
<keyword id="KW-0732">Signal</keyword>
<dbReference type="EMBL" id="AF139911">
    <property type="protein sequence ID" value="AAF44343.1"/>
    <property type="molecule type" value="mRNA"/>
</dbReference>
<dbReference type="GO" id="GO:0005615">
    <property type="term" value="C:extracellular space"/>
    <property type="evidence" value="ECO:0000250"/>
    <property type="project" value="UniProtKB"/>
</dbReference>
<dbReference type="GO" id="GO:0005183">
    <property type="term" value="F:gonadotropin hormone-releasing hormone activity"/>
    <property type="evidence" value="ECO:0007669"/>
    <property type="project" value="InterPro"/>
</dbReference>
<dbReference type="InterPro" id="IPR002012">
    <property type="entry name" value="GnRH"/>
</dbReference>
<dbReference type="InterPro" id="IPR019792">
    <property type="entry name" value="Gonadoliberin"/>
</dbReference>
<dbReference type="InterPro" id="IPR004079">
    <property type="entry name" value="Gonadoliberin_I_precursor"/>
</dbReference>
<dbReference type="PANTHER" id="PTHR10522">
    <property type="entry name" value="GONADOLIBERIN"/>
    <property type="match status" value="1"/>
</dbReference>
<dbReference type="PANTHER" id="PTHR10522:SF5">
    <property type="entry name" value="PREPROGONADOTROPIN-RELEASING HORMONE 2"/>
    <property type="match status" value="1"/>
</dbReference>
<dbReference type="PRINTS" id="PR01541">
    <property type="entry name" value="GONADOLIBRNI"/>
</dbReference>
<dbReference type="PROSITE" id="PS00473">
    <property type="entry name" value="GNRH"/>
    <property type="match status" value="1"/>
</dbReference>
<proteinExistence type="evidence at transcript level"/>
<reference key="1">
    <citation type="journal article" date="2000" name="Mol. Cell. Endocrinol.">
        <title>Molecular cloning, distribution and pharmacological characterization of a novel gonadotropin-releasing hormone (Trp8 GnRH) in frog brain.</title>
        <authorList>
            <person name="Yoo M.S."/>
            <person name="Kang H.M."/>
            <person name="Choi H.S."/>
            <person name="Kim J.W."/>
            <person name="Troskie B.E."/>
            <person name="Millar R.P."/>
            <person name="Kwon H.B."/>
        </authorList>
    </citation>
    <scope>NUCLEOTIDE SEQUENCE [MRNA]</scope>
    <source>
        <tissue>Brain</tissue>
    </source>
</reference>
<organism>
    <name type="scientific">Rana dybowskii</name>
    <name type="common">Dybovsky's frog</name>
    <name type="synonym">Korean brown frog</name>
    <dbReference type="NCBI Taxonomy" id="71582"/>
    <lineage>
        <taxon>Eukaryota</taxon>
        <taxon>Metazoa</taxon>
        <taxon>Chordata</taxon>
        <taxon>Craniata</taxon>
        <taxon>Vertebrata</taxon>
        <taxon>Euteleostomi</taxon>
        <taxon>Amphibia</taxon>
        <taxon>Batrachia</taxon>
        <taxon>Anura</taxon>
        <taxon>Neobatrachia</taxon>
        <taxon>Ranoidea</taxon>
        <taxon>Ranidae</taxon>
        <taxon>Rana</taxon>
        <taxon>Rana</taxon>
    </lineage>
</organism>
<feature type="signal peptide">
    <location>
        <begin position="1"/>
        <end position="24"/>
    </location>
</feature>
<feature type="chain" id="PRO_0000012550" description="Trp-8 progonadoliberin">
    <location>
        <begin position="25"/>
        <end position="90"/>
    </location>
</feature>
<feature type="peptide" id="PRO_0000012551" description="Trp-8 gonadoliberin">
    <location>
        <begin position="25"/>
        <end position="34"/>
    </location>
</feature>
<feature type="peptide" id="PRO_0000012552" description="GnRH-associated peptide I">
    <location>
        <begin position="38"/>
        <end position="86"/>
    </location>
</feature>
<feature type="modified residue" description="Pyrrolidone carboxylic acid" evidence="1">
    <location>
        <position position="25"/>
    </location>
</feature>
<feature type="modified residue" description="Glycine amide" evidence="1">
    <location>
        <position position="34"/>
    </location>
</feature>